<evidence type="ECO:0000255" key="1">
    <source>
        <dbReference type="HAMAP-Rule" id="MF_00480"/>
    </source>
</evidence>
<evidence type="ECO:0000305" key="2"/>
<gene>
    <name evidence="1" type="primary">rpsG</name>
    <name type="ordered locus">PA4267</name>
</gene>
<name>RS7_PSEAE</name>
<comment type="function">
    <text evidence="1">One of the primary rRNA binding proteins, it binds directly to 16S rRNA where it nucleates assembly of the head domain of the 30S subunit. Is located at the subunit interface close to the decoding center, probably blocks exit of the E-site tRNA.</text>
</comment>
<comment type="subunit">
    <text evidence="1">Part of the 30S ribosomal subunit. Contacts proteins S9 and S11.</text>
</comment>
<comment type="similarity">
    <text evidence="1">Belongs to the universal ribosomal protein uS7 family.</text>
</comment>
<protein>
    <recommendedName>
        <fullName evidence="1">Small ribosomal subunit protein uS7</fullName>
    </recommendedName>
    <alternativeName>
        <fullName evidence="2">30S ribosomal protein S7</fullName>
    </alternativeName>
</protein>
<feature type="chain" id="PRO_0000124322" description="Small ribosomal subunit protein uS7">
    <location>
        <begin position="1"/>
        <end position="156"/>
    </location>
</feature>
<keyword id="KW-0002">3D-structure</keyword>
<keyword id="KW-1185">Reference proteome</keyword>
<keyword id="KW-0687">Ribonucleoprotein</keyword>
<keyword id="KW-0689">Ribosomal protein</keyword>
<keyword id="KW-0694">RNA-binding</keyword>
<keyword id="KW-0699">rRNA-binding</keyword>
<keyword id="KW-0820">tRNA-binding</keyword>
<accession>Q9HWD1</accession>
<reference key="1">
    <citation type="journal article" date="2000" name="Nature">
        <title>Complete genome sequence of Pseudomonas aeruginosa PAO1, an opportunistic pathogen.</title>
        <authorList>
            <person name="Stover C.K."/>
            <person name="Pham X.-Q.T."/>
            <person name="Erwin A.L."/>
            <person name="Mizoguchi S.D."/>
            <person name="Warrener P."/>
            <person name="Hickey M.J."/>
            <person name="Brinkman F.S.L."/>
            <person name="Hufnagle W.O."/>
            <person name="Kowalik D.J."/>
            <person name="Lagrou M."/>
            <person name="Garber R.L."/>
            <person name="Goltry L."/>
            <person name="Tolentino E."/>
            <person name="Westbrock-Wadman S."/>
            <person name="Yuan Y."/>
            <person name="Brody L.L."/>
            <person name="Coulter S.N."/>
            <person name="Folger K.R."/>
            <person name="Kas A."/>
            <person name="Larbig K."/>
            <person name="Lim R.M."/>
            <person name="Smith K.A."/>
            <person name="Spencer D.H."/>
            <person name="Wong G.K.-S."/>
            <person name="Wu Z."/>
            <person name="Paulsen I.T."/>
            <person name="Reizer J."/>
            <person name="Saier M.H. Jr."/>
            <person name="Hancock R.E.W."/>
            <person name="Lory S."/>
            <person name="Olson M.V."/>
        </authorList>
    </citation>
    <scope>NUCLEOTIDE SEQUENCE [LARGE SCALE GENOMIC DNA]</scope>
    <source>
        <strain>ATCC 15692 / DSM 22644 / CIP 104116 / JCM 14847 / LMG 12228 / 1C / PRS 101 / PAO1</strain>
    </source>
</reference>
<sequence length="156" mass="17504">MPRRRVAAKREVLADPKYGSQILAKFMNHVMESGKKAVAERIVYGALDKVKERGKADPLETFEKALDAIAPLVEVKSRRVGGATYQVPVEVRPSRRNALAMRWLVDFARKRGEKSMALRLAGELLDAAEGKGAAVKKREDVHRMAEANKAFSHYRF</sequence>
<dbReference type="EMBL" id="AE004091">
    <property type="protein sequence ID" value="AAG07655.1"/>
    <property type="molecule type" value="Genomic_DNA"/>
</dbReference>
<dbReference type="PIR" id="E83112">
    <property type="entry name" value="E83112"/>
</dbReference>
<dbReference type="RefSeq" id="NP_252957.1">
    <property type="nucleotide sequence ID" value="NC_002516.2"/>
</dbReference>
<dbReference type="RefSeq" id="WP_003093742.1">
    <property type="nucleotide sequence ID" value="NZ_QZGE01000028.1"/>
</dbReference>
<dbReference type="PDB" id="7UNR">
    <property type="method" value="EM"/>
    <property type="resolution" value="2.90 A"/>
    <property type="chains" value="g=1-156"/>
</dbReference>
<dbReference type="PDB" id="7UNU">
    <property type="method" value="EM"/>
    <property type="resolution" value="2.90 A"/>
    <property type="chains" value="g=1-156"/>
</dbReference>
<dbReference type="PDB" id="7UNV">
    <property type="method" value="EM"/>
    <property type="resolution" value="2.70 A"/>
    <property type="chains" value="g=1-156"/>
</dbReference>
<dbReference type="PDB" id="7UNW">
    <property type="method" value="EM"/>
    <property type="resolution" value="2.60 A"/>
    <property type="chains" value="g=1-156"/>
</dbReference>
<dbReference type="PDB" id="8CD1">
    <property type="method" value="EM"/>
    <property type="resolution" value="3.00 A"/>
    <property type="chains" value="g=1-156"/>
</dbReference>
<dbReference type="PDB" id="8RWG">
    <property type="method" value="EM"/>
    <property type="resolution" value="2.46 A"/>
    <property type="chains" value="f=1-156"/>
</dbReference>
<dbReference type="PDBsum" id="7UNR"/>
<dbReference type="PDBsum" id="7UNU"/>
<dbReference type="PDBsum" id="7UNV"/>
<dbReference type="PDBsum" id="7UNW"/>
<dbReference type="PDBsum" id="8CD1"/>
<dbReference type="PDBsum" id="8RWG"/>
<dbReference type="EMDB" id="EMD-16566"/>
<dbReference type="EMDB" id="EMD-19547"/>
<dbReference type="EMDB" id="EMD-26630"/>
<dbReference type="EMDB" id="EMD-26633"/>
<dbReference type="EMDB" id="EMD-26634"/>
<dbReference type="EMDB" id="EMD-26635"/>
<dbReference type="SMR" id="Q9HWD1"/>
<dbReference type="FunCoup" id="Q9HWD1">
    <property type="interactions" value="936"/>
</dbReference>
<dbReference type="STRING" id="208964.PA4267"/>
<dbReference type="PaxDb" id="208964-PA4267"/>
<dbReference type="GeneID" id="77219194"/>
<dbReference type="GeneID" id="881745"/>
<dbReference type="KEGG" id="pae:PA4267"/>
<dbReference type="PATRIC" id="fig|208964.12.peg.4468"/>
<dbReference type="PseudoCAP" id="PA4267"/>
<dbReference type="HOGENOM" id="CLU_072226_1_1_6"/>
<dbReference type="InParanoid" id="Q9HWD1"/>
<dbReference type="OrthoDB" id="9807653at2"/>
<dbReference type="PhylomeDB" id="Q9HWD1"/>
<dbReference type="BioCyc" id="PAER208964:G1FZ6-4340-MONOMER"/>
<dbReference type="PRO" id="PR:Q9HWD1"/>
<dbReference type="Proteomes" id="UP000002438">
    <property type="component" value="Chromosome"/>
</dbReference>
<dbReference type="GO" id="GO:0022627">
    <property type="term" value="C:cytosolic small ribosomal subunit"/>
    <property type="evidence" value="ECO:0000318"/>
    <property type="project" value="GO_Central"/>
</dbReference>
<dbReference type="GO" id="GO:0005840">
    <property type="term" value="C:ribosome"/>
    <property type="evidence" value="ECO:0000318"/>
    <property type="project" value="GO_Central"/>
</dbReference>
<dbReference type="GO" id="GO:0003729">
    <property type="term" value="F:mRNA binding"/>
    <property type="evidence" value="ECO:0000318"/>
    <property type="project" value="GO_Central"/>
</dbReference>
<dbReference type="GO" id="GO:0019843">
    <property type="term" value="F:rRNA binding"/>
    <property type="evidence" value="ECO:0000318"/>
    <property type="project" value="GO_Central"/>
</dbReference>
<dbReference type="GO" id="GO:0003735">
    <property type="term" value="F:structural constituent of ribosome"/>
    <property type="evidence" value="ECO:0000318"/>
    <property type="project" value="GO_Central"/>
</dbReference>
<dbReference type="GO" id="GO:0000049">
    <property type="term" value="F:tRNA binding"/>
    <property type="evidence" value="ECO:0007669"/>
    <property type="project" value="UniProtKB-UniRule"/>
</dbReference>
<dbReference type="GO" id="GO:0000028">
    <property type="term" value="P:ribosomal small subunit assembly"/>
    <property type="evidence" value="ECO:0000318"/>
    <property type="project" value="GO_Central"/>
</dbReference>
<dbReference type="GO" id="GO:0006412">
    <property type="term" value="P:translation"/>
    <property type="evidence" value="ECO:0000318"/>
    <property type="project" value="GO_Central"/>
</dbReference>
<dbReference type="CDD" id="cd14869">
    <property type="entry name" value="uS7_Bacteria"/>
    <property type="match status" value="1"/>
</dbReference>
<dbReference type="FunFam" id="1.10.455.10:FF:000001">
    <property type="entry name" value="30S ribosomal protein S7"/>
    <property type="match status" value="1"/>
</dbReference>
<dbReference type="Gene3D" id="1.10.455.10">
    <property type="entry name" value="Ribosomal protein S7 domain"/>
    <property type="match status" value="1"/>
</dbReference>
<dbReference type="HAMAP" id="MF_00480_B">
    <property type="entry name" value="Ribosomal_uS7_B"/>
    <property type="match status" value="1"/>
</dbReference>
<dbReference type="InterPro" id="IPR000235">
    <property type="entry name" value="Ribosomal_uS7"/>
</dbReference>
<dbReference type="InterPro" id="IPR005717">
    <property type="entry name" value="Ribosomal_uS7_bac/org-type"/>
</dbReference>
<dbReference type="InterPro" id="IPR020606">
    <property type="entry name" value="Ribosomal_uS7_CS"/>
</dbReference>
<dbReference type="InterPro" id="IPR023798">
    <property type="entry name" value="Ribosomal_uS7_dom"/>
</dbReference>
<dbReference type="InterPro" id="IPR036823">
    <property type="entry name" value="Ribosomal_uS7_dom_sf"/>
</dbReference>
<dbReference type="NCBIfam" id="TIGR01029">
    <property type="entry name" value="rpsG_bact"/>
    <property type="match status" value="1"/>
</dbReference>
<dbReference type="PANTHER" id="PTHR11205">
    <property type="entry name" value="RIBOSOMAL PROTEIN S7"/>
    <property type="match status" value="1"/>
</dbReference>
<dbReference type="Pfam" id="PF00177">
    <property type="entry name" value="Ribosomal_S7"/>
    <property type="match status" value="1"/>
</dbReference>
<dbReference type="PIRSF" id="PIRSF002122">
    <property type="entry name" value="RPS7p_RPS7a_RPS5e_RPS7o"/>
    <property type="match status" value="1"/>
</dbReference>
<dbReference type="SUPFAM" id="SSF47973">
    <property type="entry name" value="Ribosomal protein S7"/>
    <property type="match status" value="1"/>
</dbReference>
<dbReference type="PROSITE" id="PS00052">
    <property type="entry name" value="RIBOSOMAL_S7"/>
    <property type="match status" value="1"/>
</dbReference>
<organism>
    <name type="scientific">Pseudomonas aeruginosa (strain ATCC 15692 / DSM 22644 / CIP 104116 / JCM 14847 / LMG 12228 / 1C / PRS 101 / PAO1)</name>
    <dbReference type="NCBI Taxonomy" id="208964"/>
    <lineage>
        <taxon>Bacteria</taxon>
        <taxon>Pseudomonadati</taxon>
        <taxon>Pseudomonadota</taxon>
        <taxon>Gammaproteobacteria</taxon>
        <taxon>Pseudomonadales</taxon>
        <taxon>Pseudomonadaceae</taxon>
        <taxon>Pseudomonas</taxon>
    </lineage>
</organism>
<proteinExistence type="evidence at protein level"/>